<keyword id="KW-0963">Cytoplasm</keyword>
<keyword id="KW-0378">Hydrolase</keyword>
<keyword id="KW-0540">Nuclease</keyword>
<keyword id="KW-1185">Reference proteome</keyword>
<keyword id="KW-0690">Ribosome biogenesis</keyword>
<evidence type="ECO:0000255" key="1">
    <source>
        <dbReference type="HAMAP-Rule" id="MF_00651"/>
    </source>
</evidence>
<gene>
    <name type="ordered locus">EUBELI_00774</name>
</gene>
<accession>C4Z578</accession>
<sequence length="140" mass="15880">MRIIGLDVGTKTVGVALSDPLGITAQPFETITRKENNKLRRTYARIEQIISEYDVTEIVVGYPKNMDDTIGERAKACEEFAAALERRTGLPVTLWDERLTTVEADEVLEECGMRRENRKTVIDQLAAVFILRGYMESKQK</sequence>
<dbReference type="EC" id="3.1.-.-" evidence="1"/>
<dbReference type="EMBL" id="CP001104">
    <property type="protein sequence ID" value="ACR71782.1"/>
    <property type="molecule type" value="Genomic_DNA"/>
</dbReference>
<dbReference type="RefSeq" id="WP_012739018.1">
    <property type="nucleotide sequence ID" value="NC_012778.1"/>
</dbReference>
<dbReference type="SMR" id="C4Z578"/>
<dbReference type="STRING" id="515620.EUBELI_00774"/>
<dbReference type="GeneID" id="41355514"/>
<dbReference type="KEGG" id="eel:EUBELI_00774"/>
<dbReference type="eggNOG" id="COG0816">
    <property type="taxonomic scope" value="Bacteria"/>
</dbReference>
<dbReference type="HOGENOM" id="CLU_098240_2_0_9"/>
<dbReference type="Proteomes" id="UP000001476">
    <property type="component" value="Chromosome"/>
</dbReference>
<dbReference type="GO" id="GO:0005829">
    <property type="term" value="C:cytosol"/>
    <property type="evidence" value="ECO:0007669"/>
    <property type="project" value="TreeGrafter"/>
</dbReference>
<dbReference type="GO" id="GO:0004518">
    <property type="term" value="F:nuclease activity"/>
    <property type="evidence" value="ECO:0007669"/>
    <property type="project" value="UniProtKB-KW"/>
</dbReference>
<dbReference type="GO" id="GO:0000967">
    <property type="term" value="P:rRNA 5'-end processing"/>
    <property type="evidence" value="ECO:0007669"/>
    <property type="project" value="UniProtKB-UniRule"/>
</dbReference>
<dbReference type="CDD" id="cd16964">
    <property type="entry name" value="YqgF"/>
    <property type="match status" value="1"/>
</dbReference>
<dbReference type="Gene3D" id="3.30.420.140">
    <property type="entry name" value="YqgF/RNase H-like domain"/>
    <property type="match status" value="1"/>
</dbReference>
<dbReference type="HAMAP" id="MF_00651">
    <property type="entry name" value="Nuclease_YqgF"/>
    <property type="match status" value="1"/>
</dbReference>
<dbReference type="InterPro" id="IPR012337">
    <property type="entry name" value="RNaseH-like_sf"/>
</dbReference>
<dbReference type="InterPro" id="IPR005227">
    <property type="entry name" value="YqgF"/>
</dbReference>
<dbReference type="InterPro" id="IPR006641">
    <property type="entry name" value="YqgF/RNaseH-like_dom"/>
</dbReference>
<dbReference type="InterPro" id="IPR037027">
    <property type="entry name" value="YqgF/RNaseH-like_dom_sf"/>
</dbReference>
<dbReference type="NCBIfam" id="TIGR00250">
    <property type="entry name" value="RNAse_H_YqgF"/>
    <property type="match status" value="1"/>
</dbReference>
<dbReference type="PANTHER" id="PTHR33317">
    <property type="entry name" value="POLYNUCLEOTIDYL TRANSFERASE, RIBONUCLEASE H-LIKE SUPERFAMILY PROTEIN"/>
    <property type="match status" value="1"/>
</dbReference>
<dbReference type="PANTHER" id="PTHR33317:SF4">
    <property type="entry name" value="POLYNUCLEOTIDYL TRANSFERASE, RIBONUCLEASE H-LIKE SUPERFAMILY PROTEIN"/>
    <property type="match status" value="1"/>
</dbReference>
<dbReference type="Pfam" id="PF03652">
    <property type="entry name" value="RuvX"/>
    <property type="match status" value="1"/>
</dbReference>
<dbReference type="SMART" id="SM00732">
    <property type="entry name" value="YqgFc"/>
    <property type="match status" value="1"/>
</dbReference>
<dbReference type="SUPFAM" id="SSF53098">
    <property type="entry name" value="Ribonuclease H-like"/>
    <property type="match status" value="1"/>
</dbReference>
<feature type="chain" id="PRO_1000212411" description="Putative pre-16S rRNA nuclease">
    <location>
        <begin position="1"/>
        <end position="140"/>
    </location>
</feature>
<comment type="function">
    <text evidence="1">Could be a nuclease involved in processing of the 5'-end of pre-16S rRNA.</text>
</comment>
<comment type="subcellular location">
    <subcellularLocation>
        <location evidence="1">Cytoplasm</location>
    </subcellularLocation>
</comment>
<comment type="similarity">
    <text evidence="1">Belongs to the YqgF nuclease family.</text>
</comment>
<name>YQGF_LACE2</name>
<proteinExistence type="inferred from homology"/>
<organism>
    <name type="scientific">Lachnospira eligens (strain ATCC 27750 / DSM 3376 / VPI C15-48 / C15-B4)</name>
    <name type="common">Eubacterium eligens</name>
    <dbReference type="NCBI Taxonomy" id="515620"/>
    <lineage>
        <taxon>Bacteria</taxon>
        <taxon>Bacillati</taxon>
        <taxon>Bacillota</taxon>
        <taxon>Clostridia</taxon>
        <taxon>Lachnospirales</taxon>
        <taxon>Lachnospiraceae</taxon>
        <taxon>Lachnospira</taxon>
    </lineage>
</organism>
<reference key="1">
    <citation type="journal article" date="2009" name="Proc. Natl. Acad. Sci. U.S.A.">
        <title>Characterizing a model human gut microbiota composed of members of its two dominant bacterial phyla.</title>
        <authorList>
            <person name="Mahowald M.A."/>
            <person name="Rey F.E."/>
            <person name="Seedorf H."/>
            <person name="Turnbaugh P.J."/>
            <person name="Fulton R.S."/>
            <person name="Wollam A."/>
            <person name="Shah N."/>
            <person name="Wang C."/>
            <person name="Magrini V."/>
            <person name="Wilson R.K."/>
            <person name="Cantarel B.L."/>
            <person name="Coutinho P.M."/>
            <person name="Henrissat B."/>
            <person name="Crock L.W."/>
            <person name="Russell A."/>
            <person name="Verberkmoes N.C."/>
            <person name="Hettich R.L."/>
            <person name="Gordon J.I."/>
        </authorList>
    </citation>
    <scope>NUCLEOTIDE SEQUENCE [LARGE SCALE GENOMIC DNA]</scope>
    <source>
        <strain>ATCC 27750 / DSM 3376 / VPI C15-48 / C15-B4</strain>
    </source>
</reference>
<protein>
    <recommendedName>
        <fullName evidence="1">Putative pre-16S rRNA nuclease</fullName>
        <ecNumber evidence="1">3.1.-.-</ecNumber>
    </recommendedName>
</protein>